<name>CLPX_CUPPJ</name>
<dbReference type="EMBL" id="CP000090">
    <property type="protein sequence ID" value="AAZ60751.1"/>
    <property type="molecule type" value="Genomic_DNA"/>
</dbReference>
<dbReference type="SMR" id="Q472D2"/>
<dbReference type="STRING" id="264198.Reut_A1381"/>
<dbReference type="KEGG" id="reu:Reut_A1381"/>
<dbReference type="eggNOG" id="COG1219">
    <property type="taxonomic scope" value="Bacteria"/>
</dbReference>
<dbReference type="HOGENOM" id="CLU_014218_8_2_4"/>
<dbReference type="OrthoDB" id="9804062at2"/>
<dbReference type="GO" id="GO:0009376">
    <property type="term" value="C:HslUV protease complex"/>
    <property type="evidence" value="ECO:0007669"/>
    <property type="project" value="TreeGrafter"/>
</dbReference>
<dbReference type="GO" id="GO:0005524">
    <property type="term" value="F:ATP binding"/>
    <property type="evidence" value="ECO:0007669"/>
    <property type="project" value="UniProtKB-UniRule"/>
</dbReference>
<dbReference type="GO" id="GO:0016887">
    <property type="term" value="F:ATP hydrolysis activity"/>
    <property type="evidence" value="ECO:0007669"/>
    <property type="project" value="InterPro"/>
</dbReference>
<dbReference type="GO" id="GO:0140662">
    <property type="term" value="F:ATP-dependent protein folding chaperone"/>
    <property type="evidence" value="ECO:0007669"/>
    <property type="project" value="InterPro"/>
</dbReference>
<dbReference type="GO" id="GO:0046983">
    <property type="term" value="F:protein dimerization activity"/>
    <property type="evidence" value="ECO:0007669"/>
    <property type="project" value="InterPro"/>
</dbReference>
<dbReference type="GO" id="GO:0051082">
    <property type="term" value="F:unfolded protein binding"/>
    <property type="evidence" value="ECO:0007669"/>
    <property type="project" value="UniProtKB-UniRule"/>
</dbReference>
<dbReference type="GO" id="GO:0008270">
    <property type="term" value="F:zinc ion binding"/>
    <property type="evidence" value="ECO:0007669"/>
    <property type="project" value="InterPro"/>
</dbReference>
<dbReference type="GO" id="GO:0051301">
    <property type="term" value="P:cell division"/>
    <property type="evidence" value="ECO:0007669"/>
    <property type="project" value="TreeGrafter"/>
</dbReference>
<dbReference type="GO" id="GO:0051603">
    <property type="term" value="P:proteolysis involved in protein catabolic process"/>
    <property type="evidence" value="ECO:0007669"/>
    <property type="project" value="TreeGrafter"/>
</dbReference>
<dbReference type="CDD" id="cd19497">
    <property type="entry name" value="RecA-like_ClpX"/>
    <property type="match status" value="1"/>
</dbReference>
<dbReference type="FunFam" id="1.10.8.60:FF:000002">
    <property type="entry name" value="ATP-dependent Clp protease ATP-binding subunit ClpX"/>
    <property type="match status" value="1"/>
</dbReference>
<dbReference type="FunFam" id="3.40.50.300:FF:000005">
    <property type="entry name" value="ATP-dependent Clp protease ATP-binding subunit ClpX"/>
    <property type="match status" value="1"/>
</dbReference>
<dbReference type="Gene3D" id="1.10.8.60">
    <property type="match status" value="1"/>
</dbReference>
<dbReference type="Gene3D" id="6.20.220.10">
    <property type="entry name" value="ClpX chaperone, C4-type zinc finger domain"/>
    <property type="match status" value="1"/>
</dbReference>
<dbReference type="Gene3D" id="3.40.50.300">
    <property type="entry name" value="P-loop containing nucleotide triphosphate hydrolases"/>
    <property type="match status" value="1"/>
</dbReference>
<dbReference type="HAMAP" id="MF_00175">
    <property type="entry name" value="ClpX"/>
    <property type="match status" value="1"/>
</dbReference>
<dbReference type="InterPro" id="IPR003593">
    <property type="entry name" value="AAA+_ATPase"/>
</dbReference>
<dbReference type="InterPro" id="IPR050052">
    <property type="entry name" value="ATP-dep_Clp_protease_ClpX"/>
</dbReference>
<dbReference type="InterPro" id="IPR003959">
    <property type="entry name" value="ATPase_AAA_core"/>
</dbReference>
<dbReference type="InterPro" id="IPR019489">
    <property type="entry name" value="Clp_ATPase_C"/>
</dbReference>
<dbReference type="InterPro" id="IPR004487">
    <property type="entry name" value="Clp_protease_ATP-bd_su_ClpX"/>
</dbReference>
<dbReference type="InterPro" id="IPR046425">
    <property type="entry name" value="ClpX_bact"/>
</dbReference>
<dbReference type="InterPro" id="IPR027417">
    <property type="entry name" value="P-loop_NTPase"/>
</dbReference>
<dbReference type="InterPro" id="IPR010603">
    <property type="entry name" value="Znf_CppX_C4"/>
</dbReference>
<dbReference type="InterPro" id="IPR038366">
    <property type="entry name" value="Znf_CppX_C4_sf"/>
</dbReference>
<dbReference type="NCBIfam" id="TIGR00382">
    <property type="entry name" value="clpX"/>
    <property type="match status" value="1"/>
</dbReference>
<dbReference type="NCBIfam" id="NF003745">
    <property type="entry name" value="PRK05342.1"/>
    <property type="match status" value="1"/>
</dbReference>
<dbReference type="PANTHER" id="PTHR48102:SF7">
    <property type="entry name" value="ATP-DEPENDENT CLP PROTEASE ATP-BINDING SUBUNIT CLPX-LIKE, MITOCHONDRIAL"/>
    <property type="match status" value="1"/>
</dbReference>
<dbReference type="PANTHER" id="PTHR48102">
    <property type="entry name" value="ATP-DEPENDENT CLP PROTEASE ATP-BINDING SUBUNIT CLPX-LIKE, MITOCHONDRIAL-RELATED"/>
    <property type="match status" value="1"/>
</dbReference>
<dbReference type="Pfam" id="PF07724">
    <property type="entry name" value="AAA_2"/>
    <property type="match status" value="1"/>
</dbReference>
<dbReference type="Pfam" id="PF10431">
    <property type="entry name" value="ClpB_D2-small"/>
    <property type="match status" value="1"/>
</dbReference>
<dbReference type="Pfam" id="PF06689">
    <property type="entry name" value="zf-C4_ClpX"/>
    <property type="match status" value="1"/>
</dbReference>
<dbReference type="SMART" id="SM00382">
    <property type="entry name" value="AAA"/>
    <property type="match status" value="1"/>
</dbReference>
<dbReference type="SMART" id="SM01086">
    <property type="entry name" value="ClpB_D2-small"/>
    <property type="match status" value="1"/>
</dbReference>
<dbReference type="SMART" id="SM00994">
    <property type="entry name" value="zf-C4_ClpX"/>
    <property type="match status" value="1"/>
</dbReference>
<dbReference type="SUPFAM" id="SSF57716">
    <property type="entry name" value="Glucocorticoid receptor-like (DNA-binding domain)"/>
    <property type="match status" value="1"/>
</dbReference>
<dbReference type="SUPFAM" id="SSF52540">
    <property type="entry name" value="P-loop containing nucleoside triphosphate hydrolases"/>
    <property type="match status" value="1"/>
</dbReference>
<dbReference type="PROSITE" id="PS51902">
    <property type="entry name" value="CLPX_ZB"/>
    <property type="match status" value="1"/>
</dbReference>
<accession>Q472D2</accession>
<protein>
    <recommendedName>
        <fullName evidence="1">ATP-dependent Clp protease ATP-binding subunit ClpX</fullName>
    </recommendedName>
</protein>
<evidence type="ECO:0000255" key="1">
    <source>
        <dbReference type="HAMAP-Rule" id="MF_00175"/>
    </source>
</evidence>
<evidence type="ECO:0000255" key="2">
    <source>
        <dbReference type="PROSITE-ProRule" id="PRU01250"/>
    </source>
</evidence>
<sequence length="425" mass="46697">MAEKKGSSSEKLLYCSFCGKSQHEVKKLIAGPSVFICDECIDLCNEIIRDEATASEKDAAAATRSDLPTPHEIRESLDQYVIGQEQAKKILAVAVYNHYKRLKHLGKKDDVELSKSNILLIGPTGSGKTLLAQTLARLLNVPFVIADATTLTEAGYVGEDVENIIQKLLQNCNYEVEKAQRGIVYIDEIDKISRKSDNPSITRDVSGEGVQQALLKLIEGTMASVPPQGGRKHPNQDFLQVDTTNILFICGGAFDGLEKVIMQRSDKTGIGFAAQVQSKEEREVSEVLPQTEPEDLIKFGLIPELIGRLPVVATLAKLDETALVQILIEPKNALVKQYQKLLAMEGVELEIRPAALSAIARKAIRRKTGARGLRSILEQSLMDVMYDLPNYKGVQKVVIDESTINGDAPPLLMYEEQQPKVSGSN</sequence>
<proteinExistence type="inferred from homology"/>
<organism>
    <name type="scientific">Cupriavidus pinatubonensis (strain JMP 134 / LMG 1197)</name>
    <name type="common">Cupriavidus necator (strain JMP 134)</name>
    <dbReference type="NCBI Taxonomy" id="264198"/>
    <lineage>
        <taxon>Bacteria</taxon>
        <taxon>Pseudomonadati</taxon>
        <taxon>Pseudomonadota</taxon>
        <taxon>Betaproteobacteria</taxon>
        <taxon>Burkholderiales</taxon>
        <taxon>Burkholderiaceae</taxon>
        <taxon>Cupriavidus</taxon>
    </lineage>
</organism>
<reference key="1">
    <citation type="journal article" date="2010" name="PLoS ONE">
        <title>The complete multipartite genome sequence of Cupriavidus necator JMP134, a versatile pollutant degrader.</title>
        <authorList>
            <person name="Lykidis A."/>
            <person name="Perez-Pantoja D."/>
            <person name="Ledger T."/>
            <person name="Mavromatis K."/>
            <person name="Anderson I.J."/>
            <person name="Ivanova N.N."/>
            <person name="Hooper S.D."/>
            <person name="Lapidus A."/>
            <person name="Lucas S."/>
            <person name="Gonzalez B."/>
            <person name="Kyrpides N.C."/>
        </authorList>
    </citation>
    <scope>NUCLEOTIDE SEQUENCE [LARGE SCALE GENOMIC DNA]</scope>
    <source>
        <strain>JMP134 / LMG 1197</strain>
    </source>
</reference>
<gene>
    <name evidence="1" type="primary">clpX</name>
    <name type="ordered locus">Reut_A1381</name>
</gene>
<comment type="function">
    <text evidence="1">ATP-dependent specificity component of the Clp protease. It directs the protease to specific substrates. Can perform chaperone functions in the absence of ClpP.</text>
</comment>
<comment type="subunit">
    <text evidence="1">Component of the ClpX-ClpP complex. Forms a hexameric ring that, in the presence of ATP, binds to fourteen ClpP subunits assembled into a disk-like structure with a central cavity, resembling the structure of eukaryotic proteasomes.</text>
</comment>
<comment type="similarity">
    <text evidence="1">Belongs to the ClpX chaperone family.</text>
</comment>
<feature type="chain" id="PRO_1000024628" description="ATP-dependent Clp protease ATP-binding subunit ClpX">
    <location>
        <begin position="1"/>
        <end position="425"/>
    </location>
</feature>
<feature type="domain" description="ClpX-type ZB" evidence="2">
    <location>
        <begin position="3"/>
        <end position="56"/>
    </location>
</feature>
<feature type="binding site" evidence="2">
    <location>
        <position position="15"/>
    </location>
    <ligand>
        <name>Zn(2+)</name>
        <dbReference type="ChEBI" id="CHEBI:29105"/>
    </ligand>
</feature>
<feature type="binding site" evidence="2">
    <location>
        <position position="18"/>
    </location>
    <ligand>
        <name>Zn(2+)</name>
        <dbReference type="ChEBI" id="CHEBI:29105"/>
    </ligand>
</feature>
<feature type="binding site" evidence="2">
    <location>
        <position position="37"/>
    </location>
    <ligand>
        <name>Zn(2+)</name>
        <dbReference type="ChEBI" id="CHEBI:29105"/>
    </ligand>
</feature>
<feature type="binding site" evidence="2">
    <location>
        <position position="40"/>
    </location>
    <ligand>
        <name>Zn(2+)</name>
        <dbReference type="ChEBI" id="CHEBI:29105"/>
    </ligand>
</feature>
<feature type="binding site" evidence="1">
    <location>
        <begin position="123"/>
        <end position="130"/>
    </location>
    <ligand>
        <name>ATP</name>
        <dbReference type="ChEBI" id="CHEBI:30616"/>
    </ligand>
</feature>
<keyword id="KW-0067">ATP-binding</keyword>
<keyword id="KW-0143">Chaperone</keyword>
<keyword id="KW-0479">Metal-binding</keyword>
<keyword id="KW-0547">Nucleotide-binding</keyword>
<keyword id="KW-0862">Zinc</keyword>